<protein>
    <recommendedName>
        <fullName evidence="1">Photosystem I P700 chlorophyll a apoprotein A1</fullName>
        <ecNumber evidence="1">1.97.1.12</ecNumber>
    </recommendedName>
    <alternativeName>
        <fullName evidence="1">PSI-A</fullName>
    </alternativeName>
    <alternativeName>
        <fullName evidence="1">PsaA</fullName>
    </alternativeName>
</protein>
<gene>
    <name evidence="1" type="primary">psaA</name>
</gene>
<name>PSAA_PELHO</name>
<dbReference type="EC" id="1.97.1.12" evidence="1"/>
<dbReference type="EMBL" id="DQ897681">
    <property type="protein sequence ID" value="ABI17257.1"/>
    <property type="molecule type" value="Genomic_DNA"/>
</dbReference>
<dbReference type="RefSeq" id="YP_784066.1">
    <property type="nucleotide sequence ID" value="NC_008454.1"/>
</dbReference>
<dbReference type="SMR" id="Q06FW5"/>
<dbReference type="GeneID" id="4362805"/>
<dbReference type="GO" id="GO:0009535">
    <property type="term" value="C:chloroplast thylakoid membrane"/>
    <property type="evidence" value="ECO:0007669"/>
    <property type="project" value="UniProtKB-SubCell"/>
</dbReference>
<dbReference type="GO" id="GO:0009522">
    <property type="term" value="C:photosystem I"/>
    <property type="evidence" value="ECO:0007669"/>
    <property type="project" value="UniProtKB-KW"/>
</dbReference>
<dbReference type="GO" id="GO:0051539">
    <property type="term" value="F:4 iron, 4 sulfur cluster binding"/>
    <property type="evidence" value="ECO:0007669"/>
    <property type="project" value="UniProtKB-KW"/>
</dbReference>
<dbReference type="GO" id="GO:0016168">
    <property type="term" value="F:chlorophyll binding"/>
    <property type="evidence" value="ECO:0007669"/>
    <property type="project" value="UniProtKB-KW"/>
</dbReference>
<dbReference type="GO" id="GO:0009055">
    <property type="term" value="F:electron transfer activity"/>
    <property type="evidence" value="ECO:0007669"/>
    <property type="project" value="UniProtKB-UniRule"/>
</dbReference>
<dbReference type="GO" id="GO:0000287">
    <property type="term" value="F:magnesium ion binding"/>
    <property type="evidence" value="ECO:0007669"/>
    <property type="project" value="UniProtKB-UniRule"/>
</dbReference>
<dbReference type="GO" id="GO:0016491">
    <property type="term" value="F:oxidoreductase activity"/>
    <property type="evidence" value="ECO:0007669"/>
    <property type="project" value="UniProtKB-KW"/>
</dbReference>
<dbReference type="GO" id="GO:0015979">
    <property type="term" value="P:photosynthesis"/>
    <property type="evidence" value="ECO:0007669"/>
    <property type="project" value="UniProtKB-UniRule"/>
</dbReference>
<dbReference type="FunFam" id="1.20.1130.10:FF:000001">
    <property type="entry name" value="Photosystem I P700 chlorophyll a apoprotein A2"/>
    <property type="match status" value="1"/>
</dbReference>
<dbReference type="Gene3D" id="1.20.1130.10">
    <property type="entry name" value="Photosystem I PsaA/PsaB"/>
    <property type="match status" value="1"/>
</dbReference>
<dbReference type="HAMAP" id="MF_00458">
    <property type="entry name" value="PSI_PsaA"/>
    <property type="match status" value="1"/>
</dbReference>
<dbReference type="InterPro" id="IPR006243">
    <property type="entry name" value="PSI_PsaA"/>
</dbReference>
<dbReference type="InterPro" id="IPR001280">
    <property type="entry name" value="PSI_PsaA/B"/>
</dbReference>
<dbReference type="InterPro" id="IPR020586">
    <property type="entry name" value="PSI_PsaA/B_CS"/>
</dbReference>
<dbReference type="InterPro" id="IPR036408">
    <property type="entry name" value="PSI_PsaA/B_sf"/>
</dbReference>
<dbReference type="NCBIfam" id="TIGR01335">
    <property type="entry name" value="psaA"/>
    <property type="match status" value="1"/>
</dbReference>
<dbReference type="PANTHER" id="PTHR30128">
    <property type="entry name" value="OUTER MEMBRANE PROTEIN, OMPA-RELATED"/>
    <property type="match status" value="1"/>
</dbReference>
<dbReference type="PANTHER" id="PTHR30128:SF19">
    <property type="entry name" value="PHOTOSYSTEM I P700 CHLOROPHYLL A APOPROTEIN A1-RELATED"/>
    <property type="match status" value="1"/>
</dbReference>
<dbReference type="Pfam" id="PF00223">
    <property type="entry name" value="PsaA_PsaB"/>
    <property type="match status" value="1"/>
</dbReference>
<dbReference type="PIRSF" id="PIRSF002905">
    <property type="entry name" value="PSI_A"/>
    <property type="match status" value="1"/>
</dbReference>
<dbReference type="PRINTS" id="PR00257">
    <property type="entry name" value="PHOTSYSPSAAB"/>
</dbReference>
<dbReference type="SUPFAM" id="SSF81558">
    <property type="entry name" value="Photosystem I subunits PsaA/PsaB"/>
    <property type="match status" value="1"/>
</dbReference>
<dbReference type="PROSITE" id="PS00419">
    <property type="entry name" value="PHOTOSYSTEM_I_PSAAB"/>
    <property type="match status" value="1"/>
</dbReference>
<feature type="chain" id="PRO_0000275956" description="Photosystem I P700 chlorophyll a apoprotein A1">
    <location>
        <begin position="1"/>
        <end position="750"/>
    </location>
</feature>
<feature type="transmembrane region" description="Helical; Name=I" evidence="1">
    <location>
        <begin position="70"/>
        <end position="93"/>
    </location>
</feature>
<feature type="transmembrane region" description="Helical; Name=II" evidence="1">
    <location>
        <begin position="156"/>
        <end position="179"/>
    </location>
</feature>
<feature type="transmembrane region" description="Helical; Name=III" evidence="1">
    <location>
        <begin position="195"/>
        <end position="219"/>
    </location>
</feature>
<feature type="transmembrane region" description="Helical; Name=IV" evidence="1">
    <location>
        <begin position="291"/>
        <end position="309"/>
    </location>
</feature>
<feature type="transmembrane region" description="Helical; Name=V" evidence="1">
    <location>
        <begin position="346"/>
        <end position="369"/>
    </location>
</feature>
<feature type="transmembrane region" description="Helical; Name=VI" evidence="1">
    <location>
        <begin position="385"/>
        <end position="411"/>
    </location>
</feature>
<feature type="transmembrane region" description="Helical; Name=VII" evidence="1">
    <location>
        <begin position="433"/>
        <end position="455"/>
    </location>
</feature>
<feature type="transmembrane region" description="Helical; Name=VIII" evidence="1">
    <location>
        <begin position="531"/>
        <end position="549"/>
    </location>
</feature>
<feature type="transmembrane region" description="Helical; Name=IX" evidence="1">
    <location>
        <begin position="589"/>
        <end position="610"/>
    </location>
</feature>
<feature type="transmembrane region" description="Helical; Name=X" evidence="1">
    <location>
        <begin position="664"/>
        <end position="686"/>
    </location>
</feature>
<feature type="transmembrane region" description="Helical; Name=XI" evidence="1">
    <location>
        <begin position="724"/>
        <end position="744"/>
    </location>
</feature>
<feature type="binding site" evidence="1">
    <location>
        <position position="573"/>
    </location>
    <ligand>
        <name>[4Fe-4S] cluster</name>
        <dbReference type="ChEBI" id="CHEBI:49883"/>
        <note>ligand shared between dimeric partners</note>
    </ligand>
</feature>
<feature type="binding site" evidence="1">
    <location>
        <position position="582"/>
    </location>
    <ligand>
        <name>[4Fe-4S] cluster</name>
        <dbReference type="ChEBI" id="CHEBI:49883"/>
        <note>ligand shared between dimeric partners</note>
    </ligand>
</feature>
<feature type="binding site" description="axial binding residue" evidence="1">
    <location>
        <position position="675"/>
    </location>
    <ligand>
        <name>chlorophyll a'</name>
        <dbReference type="ChEBI" id="CHEBI:189419"/>
        <label>A1</label>
    </ligand>
    <ligandPart>
        <name>Mg</name>
        <dbReference type="ChEBI" id="CHEBI:25107"/>
    </ligandPart>
</feature>
<feature type="binding site" description="axial binding residue" evidence="1">
    <location>
        <position position="683"/>
    </location>
    <ligand>
        <name>chlorophyll a</name>
        <dbReference type="ChEBI" id="CHEBI:58416"/>
        <label>A3</label>
    </ligand>
    <ligandPart>
        <name>Mg</name>
        <dbReference type="ChEBI" id="CHEBI:25107"/>
    </ligandPart>
</feature>
<feature type="binding site" evidence="1">
    <location>
        <position position="691"/>
    </location>
    <ligand>
        <name>chlorophyll a</name>
        <dbReference type="ChEBI" id="CHEBI:58416"/>
        <label>A3</label>
    </ligand>
</feature>
<feature type="binding site" evidence="1">
    <location>
        <position position="692"/>
    </location>
    <ligand>
        <name>phylloquinone</name>
        <dbReference type="ChEBI" id="CHEBI:18067"/>
        <label>A</label>
    </ligand>
</feature>
<comment type="function">
    <text>PsaA and PsaB bind P700, the primary electron donor of photosystem I (PSI), as well as the electron acceptors A0, A1 and FX. PSI is a plastocyanin-ferredoxin oxidoreductase, converting photonic excitation into a charge separation, which transfers an electron from the donor P700 chlorophyll pair to the spectroscopically characterized acceptors A0, A1, FX, FA and FB in turn. Oxidized P700 is reduced on the lumenal side of the thylakoid membrane by plastocyanin.</text>
</comment>
<comment type="catalytic activity">
    <reaction evidence="1">
        <text>reduced [plastocyanin] + hnu + oxidized [2Fe-2S]-[ferredoxin] = oxidized [plastocyanin] + reduced [2Fe-2S]-[ferredoxin]</text>
        <dbReference type="Rhea" id="RHEA:30407"/>
        <dbReference type="Rhea" id="RHEA-COMP:10000"/>
        <dbReference type="Rhea" id="RHEA-COMP:10001"/>
        <dbReference type="Rhea" id="RHEA-COMP:10039"/>
        <dbReference type="Rhea" id="RHEA-COMP:10040"/>
        <dbReference type="ChEBI" id="CHEBI:29036"/>
        <dbReference type="ChEBI" id="CHEBI:30212"/>
        <dbReference type="ChEBI" id="CHEBI:33737"/>
        <dbReference type="ChEBI" id="CHEBI:33738"/>
        <dbReference type="ChEBI" id="CHEBI:49552"/>
        <dbReference type="EC" id="1.97.1.12"/>
    </reaction>
</comment>
<comment type="cofactor">
    <text evidence="1">P700 is a chlorophyll a/chlorophyll a' dimer, A0 is one or more chlorophyll a, A1 is one or both phylloquinones and FX is a shared 4Fe-4S iron-sulfur center.</text>
</comment>
<comment type="subunit">
    <text evidence="1">The PsaA/B heterodimer binds the P700 chlorophyll special pair and subsequent electron acceptors. PSI consists of a core antenna complex that captures photons, and an electron transfer chain that converts photonic excitation into a charge separation. The eukaryotic PSI reaction center is composed of at least 11 subunits.</text>
</comment>
<comment type="subcellular location">
    <subcellularLocation>
        <location evidence="1">Plastid</location>
        <location evidence="1">Chloroplast thylakoid membrane</location>
        <topology evidence="1">Multi-pass membrane protein</topology>
    </subcellularLocation>
</comment>
<comment type="similarity">
    <text evidence="1">Belongs to the PsaA/PsaB family.</text>
</comment>
<proteinExistence type="inferred from homology"/>
<evidence type="ECO:0000255" key="1">
    <source>
        <dbReference type="HAMAP-Rule" id="MF_00458"/>
    </source>
</evidence>
<keyword id="KW-0004">4Fe-4S</keyword>
<keyword id="KW-0148">Chlorophyll</keyword>
<keyword id="KW-0150">Chloroplast</keyword>
<keyword id="KW-0157">Chromophore</keyword>
<keyword id="KW-0249">Electron transport</keyword>
<keyword id="KW-0408">Iron</keyword>
<keyword id="KW-0411">Iron-sulfur</keyword>
<keyword id="KW-0460">Magnesium</keyword>
<keyword id="KW-0472">Membrane</keyword>
<keyword id="KW-0479">Metal-binding</keyword>
<keyword id="KW-0560">Oxidoreductase</keyword>
<keyword id="KW-0602">Photosynthesis</keyword>
<keyword id="KW-0603">Photosystem I</keyword>
<keyword id="KW-0934">Plastid</keyword>
<keyword id="KW-0793">Thylakoid</keyword>
<keyword id="KW-0812">Transmembrane</keyword>
<keyword id="KW-1133">Transmembrane helix</keyword>
<keyword id="KW-0813">Transport</keyword>
<organism>
    <name type="scientific">Pelargonium hortorum</name>
    <name type="common">Common geranium</name>
    <name type="synonym">Pelargonium inquinans x Pelargonium zonale</name>
    <dbReference type="NCBI Taxonomy" id="4031"/>
    <lineage>
        <taxon>Eukaryota</taxon>
        <taxon>Viridiplantae</taxon>
        <taxon>Streptophyta</taxon>
        <taxon>Embryophyta</taxon>
        <taxon>Tracheophyta</taxon>
        <taxon>Spermatophyta</taxon>
        <taxon>Magnoliopsida</taxon>
        <taxon>eudicotyledons</taxon>
        <taxon>Gunneridae</taxon>
        <taxon>Pentapetalae</taxon>
        <taxon>rosids</taxon>
        <taxon>malvids</taxon>
        <taxon>Geraniales</taxon>
        <taxon>Geraniaceae</taxon>
        <taxon>Pelargonium</taxon>
    </lineage>
</organism>
<accession>Q06FW5</accession>
<sequence length="750" mass="83232">MIIRSSEPEVKILVDRDPIKTSFEEWARPGHFSRTIAKGPDTTTWIWNLHADAHDFDSHTSDLEEISRKVFSAHFGQLSIIFLWLSGMYFHGARFSNYEAWLSDPTHIGPSAQVVWPIVGQEILNGDVGGGFRGIQITSGFFQIWRASGITSELQLYCTAIGALVFAALMLFAGWFHYHKAAPKLAWFQDVESMLNHHLAGLLGLGSLSWAGHQVHVSLPINQFLNAGVDPKEIPLPHEFILNRDLLAQLYPSFSEGATPLFTLNWSKYAEFLTFRGGLDPVTGGLWLTDIAHHHLAIAILFLIAGHMYRTNWGIGHDLKEILEAHKGPFTGQGHKGLYEILTTSWHAQLSLNLAMLGSLTIVVAHHMYSMPPYPYLATDYGTQLSLFTHHMWIGAFLIVGAAAHAAIFMVRDYDPTTRYNDLLDRVLRHRDAIISHLNWVCIFLGFHSFGLYIHNDTMSALGRPQDMFSDTAIQLQPVFAQWIQNTHALAPGSTAPGATTGTSLTWGGVDLVAVGGKVALLPIPLGTADFLVHHIHAFTIHVTLLILLKGVLFARSSRLIPDKANLGFRFPCDGPGRGGTCQVSAWDHVFLGLFWMYNAISVVIFHFSWKMQSDVWGSISEQGVVTHITGGNFAQSSITINGWLRDFLWAQASQVIQSYGSSLSAYGLFFLGAHFVWAFSLMFLFSGRGYWQELIESIVWAHNKLKVAPATQPRALSIVQGRAVGVTHYLLGGIATTWAFFLARIIAVG</sequence>
<reference key="1">
    <citation type="journal article" date="2006" name="Mol. Biol. Evol.">
        <title>The complete chloroplast genome sequence of Pelargonium x hortorum: organization and evolution of the largest and most highly rearranged chloroplast genome of land plants.</title>
        <authorList>
            <person name="Chumley T.W."/>
            <person name="Palmer J.D."/>
            <person name="Mower J.P."/>
            <person name="Fourcade H.M."/>
            <person name="Calie P.J."/>
            <person name="Boore J.L."/>
            <person name="Jansen R.K."/>
        </authorList>
    </citation>
    <scope>NUCLEOTIDE SEQUENCE [LARGE SCALE GENOMIC DNA]</scope>
    <source>
        <strain>cv. Ringo White</strain>
    </source>
</reference>
<geneLocation type="chloroplast"/>